<keyword id="KW-1185">Reference proteome</keyword>
<keyword id="KW-0687">Ribonucleoprotein</keyword>
<keyword id="KW-0689">Ribosomal protein</keyword>
<keyword id="KW-0694">RNA-binding</keyword>
<keyword id="KW-0699">rRNA-binding</keyword>
<feature type="chain" id="PRO_0000128464" description="Small ribosomal subunit protein uS17">
    <location>
        <begin position="1"/>
        <end position="89"/>
    </location>
</feature>
<evidence type="ECO:0000255" key="1">
    <source>
        <dbReference type="HAMAP-Rule" id="MF_01345"/>
    </source>
</evidence>
<evidence type="ECO:0000305" key="2"/>
<comment type="function">
    <text evidence="1">One of the primary rRNA binding proteins, it binds specifically to the 5'-end of 16S ribosomal RNA.</text>
</comment>
<comment type="subunit">
    <text evidence="1">Part of the 30S ribosomal subunit.</text>
</comment>
<comment type="similarity">
    <text evidence="1">Belongs to the universal ribosomal protein uS17 family.</text>
</comment>
<comment type="sequence caution" evidence="2">
    <conflict type="erroneous initiation">
        <sequence resource="EMBL-CDS" id="AAN47947"/>
    </conflict>
    <text>Truncated N-terminus.</text>
</comment>
<proteinExistence type="inferred from homology"/>
<name>RS17_LEPIN</name>
<accession>Q9XD27</accession>
<gene>
    <name evidence="1" type="primary">rpsQ</name>
    <name type="ordered locus">LA_0748</name>
</gene>
<protein>
    <recommendedName>
        <fullName evidence="1">Small ribosomal subunit protein uS17</fullName>
    </recommendedName>
    <alternativeName>
        <fullName evidence="2">30S ribosomal protein S17</fullName>
    </alternativeName>
</protein>
<reference key="1">
    <citation type="journal article" date="2000" name="FEMS Microbiol. Lett.">
        <title>Characterization of the Leptospira interrogans S10-spc-alpha operon.</title>
        <authorList>
            <person name="Zuerner R.L."/>
            <person name="Hartskeerl R.A."/>
            <person name="van de Kemp H."/>
            <person name="Bal A.E."/>
        </authorList>
    </citation>
    <scope>NUCLEOTIDE SEQUENCE [GENOMIC DNA]</scope>
    <source>
        <strain>Lai / Serogroup Icterohaemorrhagiae / Serovar lai</strain>
    </source>
</reference>
<reference key="2">
    <citation type="journal article" date="2003" name="Nature">
        <title>Unique physiological and pathogenic features of Leptospira interrogans revealed by whole-genome sequencing.</title>
        <authorList>
            <person name="Ren S.-X."/>
            <person name="Fu G."/>
            <person name="Jiang X.-G."/>
            <person name="Zeng R."/>
            <person name="Miao Y.-G."/>
            <person name="Xu H."/>
            <person name="Zhang Y.-X."/>
            <person name="Xiong H."/>
            <person name="Lu G."/>
            <person name="Lu L.-F."/>
            <person name="Jiang H.-Q."/>
            <person name="Jia J."/>
            <person name="Tu Y.-F."/>
            <person name="Jiang J.-X."/>
            <person name="Gu W.-Y."/>
            <person name="Zhang Y.-Q."/>
            <person name="Cai Z."/>
            <person name="Sheng H.-H."/>
            <person name="Yin H.-F."/>
            <person name="Zhang Y."/>
            <person name="Zhu G.-F."/>
            <person name="Wan M."/>
            <person name="Huang H.-L."/>
            <person name="Qian Z."/>
            <person name="Wang S.-Y."/>
            <person name="Ma W."/>
            <person name="Yao Z.-J."/>
            <person name="Shen Y."/>
            <person name="Qiang B.-Q."/>
            <person name="Xia Q.-C."/>
            <person name="Guo X.-K."/>
            <person name="Danchin A."/>
            <person name="Saint Girons I."/>
            <person name="Somerville R.L."/>
            <person name="Wen Y.-M."/>
            <person name="Shi M.-H."/>
            <person name="Chen Z."/>
            <person name="Xu J.-G."/>
            <person name="Zhao G.-P."/>
        </authorList>
    </citation>
    <scope>NUCLEOTIDE SEQUENCE [LARGE SCALE GENOMIC DNA]</scope>
    <source>
        <strain>56601</strain>
    </source>
</reference>
<sequence length="89" mass="10377">MTAGKQHINKSLLYEGRVVSNSMNKTVVILVETRKTHPKFKKIVRRSVRLKVHDEKNECVVGDKILAIETRPLSKEKRHRLYKIVEKAK</sequence>
<dbReference type="EMBL" id="AF115283">
    <property type="protein sequence ID" value="AAD40592.1"/>
    <property type="molecule type" value="Genomic_DNA"/>
</dbReference>
<dbReference type="EMBL" id="AE010300">
    <property type="protein sequence ID" value="AAN47947.2"/>
    <property type="status" value="ALT_INIT"/>
    <property type="molecule type" value="Genomic_DNA"/>
</dbReference>
<dbReference type="RefSeq" id="NP_710929.2">
    <property type="nucleotide sequence ID" value="NC_004342.2"/>
</dbReference>
<dbReference type="RefSeq" id="WP_000123883.1">
    <property type="nucleotide sequence ID" value="NC_004342.2"/>
</dbReference>
<dbReference type="SMR" id="Q9XD27"/>
<dbReference type="FunCoup" id="Q9XD27">
    <property type="interactions" value="385"/>
</dbReference>
<dbReference type="STRING" id="189518.LA_0748"/>
<dbReference type="PaxDb" id="189518-LA_0748"/>
<dbReference type="EnsemblBacteria" id="AAN47947">
    <property type="protein sequence ID" value="AAN47947"/>
    <property type="gene ID" value="LA_0748"/>
</dbReference>
<dbReference type="GeneID" id="61142738"/>
<dbReference type="KEGG" id="lil:LA_0748"/>
<dbReference type="PATRIC" id="fig|189518.3.peg.754"/>
<dbReference type="HOGENOM" id="CLU_073626_1_0_12"/>
<dbReference type="InParanoid" id="Q9XD27"/>
<dbReference type="OrthoDB" id="9811714at2"/>
<dbReference type="Proteomes" id="UP000001408">
    <property type="component" value="Chromosome I"/>
</dbReference>
<dbReference type="GO" id="GO:0022627">
    <property type="term" value="C:cytosolic small ribosomal subunit"/>
    <property type="evidence" value="ECO:0000318"/>
    <property type="project" value="GO_Central"/>
</dbReference>
<dbReference type="GO" id="GO:0019843">
    <property type="term" value="F:rRNA binding"/>
    <property type="evidence" value="ECO:0007669"/>
    <property type="project" value="UniProtKB-UniRule"/>
</dbReference>
<dbReference type="GO" id="GO:0003735">
    <property type="term" value="F:structural constituent of ribosome"/>
    <property type="evidence" value="ECO:0000318"/>
    <property type="project" value="GO_Central"/>
</dbReference>
<dbReference type="GO" id="GO:0006412">
    <property type="term" value="P:translation"/>
    <property type="evidence" value="ECO:0007669"/>
    <property type="project" value="UniProtKB-UniRule"/>
</dbReference>
<dbReference type="CDD" id="cd00364">
    <property type="entry name" value="Ribosomal_uS17"/>
    <property type="match status" value="1"/>
</dbReference>
<dbReference type="Gene3D" id="2.40.50.140">
    <property type="entry name" value="Nucleic acid-binding proteins"/>
    <property type="match status" value="1"/>
</dbReference>
<dbReference type="HAMAP" id="MF_01345_B">
    <property type="entry name" value="Ribosomal_uS17_B"/>
    <property type="match status" value="1"/>
</dbReference>
<dbReference type="InterPro" id="IPR012340">
    <property type="entry name" value="NA-bd_OB-fold"/>
</dbReference>
<dbReference type="InterPro" id="IPR000266">
    <property type="entry name" value="Ribosomal_uS17"/>
</dbReference>
<dbReference type="InterPro" id="IPR019984">
    <property type="entry name" value="Ribosomal_uS17_bact/chlr"/>
</dbReference>
<dbReference type="InterPro" id="IPR019979">
    <property type="entry name" value="Ribosomal_uS17_CS"/>
</dbReference>
<dbReference type="NCBIfam" id="NF004123">
    <property type="entry name" value="PRK05610.1"/>
    <property type="match status" value="1"/>
</dbReference>
<dbReference type="NCBIfam" id="TIGR03635">
    <property type="entry name" value="uS17_bact"/>
    <property type="match status" value="1"/>
</dbReference>
<dbReference type="PANTHER" id="PTHR10744">
    <property type="entry name" value="40S RIBOSOMAL PROTEIN S11 FAMILY MEMBER"/>
    <property type="match status" value="1"/>
</dbReference>
<dbReference type="PANTHER" id="PTHR10744:SF1">
    <property type="entry name" value="SMALL RIBOSOMAL SUBUNIT PROTEIN US17M"/>
    <property type="match status" value="1"/>
</dbReference>
<dbReference type="Pfam" id="PF00366">
    <property type="entry name" value="Ribosomal_S17"/>
    <property type="match status" value="1"/>
</dbReference>
<dbReference type="PRINTS" id="PR00973">
    <property type="entry name" value="RIBOSOMALS17"/>
</dbReference>
<dbReference type="SUPFAM" id="SSF50249">
    <property type="entry name" value="Nucleic acid-binding proteins"/>
    <property type="match status" value="1"/>
</dbReference>
<dbReference type="PROSITE" id="PS00056">
    <property type="entry name" value="RIBOSOMAL_S17"/>
    <property type="match status" value="1"/>
</dbReference>
<organism>
    <name type="scientific">Leptospira interrogans serogroup Icterohaemorrhagiae serovar Lai (strain 56601)</name>
    <dbReference type="NCBI Taxonomy" id="189518"/>
    <lineage>
        <taxon>Bacteria</taxon>
        <taxon>Pseudomonadati</taxon>
        <taxon>Spirochaetota</taxon>
        <taxon>Spirochaetia</taxon>
        <taxon>Leptospirales</taxon>
        <taxon>Leptospiraceae</taxon>
        <taxon>Leptospira</taxon>
    </lineage>
</organism>